<reference key="1">
    <citation type="journal article" date="2008" name="Environ. Microbiol.">
        <title>The genome of Erwinia tasmaniensis strain Et1/99, a non-pathogenic bacterium in the genus Erwinia.</title>
        <authorList>
            <person name="Kube M."/>
            <person name="Migdoll A.M."/>
            <person name="Mueller I."/>
            <person name="Kuhl H."/>
            <person name="Beck A."/>
            <person name="Reinhardt R."/>
            <person name="Geider K."/>
        </authorList>
    </citation>
    <scope>NUCLEOTIDE SEQUENCE [LARGE SCALE GENOMIC DNA]</scope>
    <source>
        <strain>DSM 17950 / CFBP 7177 / CIP 109463 / NCPPB 4357 / Et1/99</strain>
    </source>
</reference>
<dbReference type="EMBL" id="CU468135">
    <property type="protein sequence ID" value="CAO96925.1"/>
    <property type="molecule type" value="Genomic_DNA"/>
</dbReference>
<dbReference type="RefSeq" id="WP_012441609.1">
    <property type="nucleotide sequence ID" value="NC_010694.1"/>
</dbReference>
<dbReference type="SMR" id="B2VEH7"/>
<dbReference type="STRING" id="465817.ETA_18790"/>
<dbReference type="KEGG" id="eta:ETA_18790"/>
<dbReference type="eggNOG" id="COG0216">
    <property type="taxonomic scope" value="Bacteria"/>
</dbReference>
<dbReference type="HOGENOM" id="CLU_036856_0_1_6"/>
<dbReference type="OrthoDB" id="9806673at2"/>
<dbReference type="Proteomes" id="UP000001726">
    <property type="component" value="Chromosome"/>
</dbReference>
<dbReference type="GO" id="GO:0005737">
    <property type="term" value="C:cytoplasm"/>
    <property type="evidence" value="ECO:0007669"/>
    <property type="project" value="UniProtKB-SubCell"/>
</dbReference>
<dbReference type="GO" id="GO:0016149">
    <property type="term" value="F:translation release factor activity, codon specific"/>
    <property type="evidence" value="ECO:0007669"/>
    <property type="project" value="UniProtKB-UniRule"/>
</dbReference>
<dbReference type="FunFam" id="3.30.160.20:FF:000004">
    <property type="entry name" value="Peptide chain release factor 1"/>
    <property type="match status" value="1"/>
</dbReference>
<dbReference type="FunFam" id="3.30.70.1660:FF:000002">
    <property type="entry name" value="Peptide chain release factor 1"/>
    <property type="match status" value="1"/>
</dbReference>
<dbReference type="FunFam" id="3.30.70.1660:FF:000004">
    <property type="entry name" value="Peptide chain release factor 1"/>
    <property type="match status" value="1"/>
</dbReference>
<dbReference type="Gene3D" id="3.30.160.20">
    <property type="match status" value="1"/>
</dbReference>
<dbReference type="Gene3D" id="3.30.70.1660">
    <property type="match status" value="2"/>
</dbReference>
<dbReference type="Gene3D" id="6.10.140.1950">
    <property type="match status" value="1"/>
</dbReference>
<dbReference type="HAMAP" id="MF_00093">
    <property type="entry name" value="Rel_fac_1"/>
    <property type="match status" value="1"/>
</dbReference>
<dbReference type="InterPro" id="IPR005139">
    <property type="entry name" value="PCRF"/>
</dbReference>
<dbReference type="InterPro" id="IPR000352">
    <property type="entry name" value="Pep_chain_release_fac_I"/>
</dbReference>
<dbReference type="InterPro" id="IPR045853">
    <property type="entry name" value="Pep_chain_release_fac_I_sf"/>
</dbReference>
<dbReference type="InterPro" id="IPR050057">
    <property type="entry name" value="Prokaryotic/Mito_RF"/>
</dbReference>
<dbReference type="InterPro" id="IPR004373">
    <property type="entry name" value="RF-1"/>
</dbReference>
<dbReference type="NCBIfam" id="TIGR00019">
    <property type="entry name" value="prfA"/>
    <property type="match status" value="1"/>
</dbReference>
<dbReference type="NCBIfam" id="NF001859">
    <property type="entry name" value="PRK00591.1"/>
    <property type="match status" value="1"/>
</dbReference>
<dbReference type="PANTHER" id="PTHR43804">
    <property type="entry name" value="LD18447P"/>
    <property type="match status" value="1"/>
</dbReference>
<dbReference type="PANTHER" id="PTHR43804:SF7">
    <property type="entry name" value="LD18447P"/>
    <property type="match status" value="1"/>
</dbReference>
<dbReference type="Pfam" id="PF03462">
    <property type="entry name" value="PCRF"/>
    <property type="match status" value="1"/>
</dbReference>
<dbReference type="Pfam" id="PF00472">
    <property type="entry name" value="RF-1"/>
    <property type="match status" value="1"/>
</dbReference>
<dbReference type="SMART" id="SM00937">
    <property type="entry name" value="PCRF"/>
    <property type="match status" value="1"/>
</dbReference>
<dbReference type="SUPFAM" id="SSF75620">
    <property type="entry name" value="Release factor"/>
    <property type="match status" value="1"/>
</dbReference>
<dbReference type="PROSITE" id="PS00745">
    <property type="entry name" value="RF_PROK_I"/>
    <property type="match status" value="1"/>
</dbReference>
<keyword id="KW-0963">Cytoplasm</keyword>
<keyword id="KW-0488">Methylation</keyword>
<keyword id="KW-0648">Protein biosynthesis</keyword>
<keyword id="KW-1185">Reference proteome</keyword>
<feature type="chain" id="PRO_1000093454" description="Peptide chain release factor 1">
    <location>
        <begin position="1"/>
        <end position="360"/>
    </location>
</feature>
<feature type="region of interest" description="Disordered" evidence="2">
    <location>
        <begin position="284"/>
        <end position="314"/>
    </location>
</feature>
<feature type="compositionally biased region" description="Basic and acidic residues" evidence="2">
    <location>
        <begin position="284"/>
        <end position="293"/>
    </location>
</feature>
<feature type="modified residue" description="N5-methylglutamine" evidence="1">
    <location>
        <position position="235"/>
    </location>
</feature>
<gene>
    <name evidence="1" type="primary">prfA</name>
    <name type="ordered locus">ETA_18790</name>
</gene>
<protein>
    <recommendedName>
        <fullName evidence="1">Peptide chain release factor 1</fullName>
        <shortName evidence="1">RF-1</shortName>
    </recommendedName>
</protein>
<comment type="function">
    <text evidence="1">Peptide chain release factor 1 directs the termination of translation in response to the peptide chain termination codons UAG and UAA.</text>
</comment>
<comment type="subcellular location">
    <subcellularLocation>
        <location evidence="1">Cytoplasm</location>
    </subcellularLocation>
</comment>
<comment type="PTM">
    <text evidence="1">Methylated by PrmC. Methylation increases the termination efficiency of RF1.</text>
</comment>
<comment type="similarity">
    <text evidence="1">Belongs to the prokaryotic/mitochondrial release factor family.</text>
</comment>
<name>RF1_ERWT9</name>
<organism>
    <name type="scientific">Erwinia tasmaniensis (strain DSM 17950 / CFBP 7177 / CIP 109463 / NCPPB 4357 / Et1/99)</name>
    <dbReference type="NCBI Taxonomy" id="465817"/>
    <lineage>
        <taxon>Bacteria</taxon>
        <taxon>Pseudomonadati</taxon>
        <taxon>Pseudomonadota</taxon>
        <taxon>Gammaproteobacteria</taxon>
        <taxon>Enterobacterales</taxon>
        <taxon>Erwiniaceae</taxon>
        <taxon>Erwinia</taxon>
    </lineage>
</organism>
<evidence type="ECO:0000255" key="1">
    <source>
        <dbReference type="HAMAP-Rule" id="MF_00093"/>
    </source>
</evidence>
<evidence type="ECO:0000256" key="2">
    <source>
        <dbReference type="SAM" id="MobiDB-lite"/>
    </source>
</evidence>
<sequence>MKPSIVAKLEALQERHEEVEAMLGDAGVIADQERFRALSREYAQLTDVSQCFRQWQQSQEDIETAEMMLSDAEMRDMAQEELQTARAASEELEQQLQVLLLPKDPDDERNCYLEVRAGTGGDEAAIFAGDLFRMYSRYAESRRWKVEVMSANEGEHGGYKEVIAKVVGEGAYGRLKFESGGHRVQRVPETESQGRIHTSACTVAVMPELPEAELPDINPSDLKIDTFRSSGAGGQHVNTTDSAIRITHLPTGIVVECQDERSQHKNKAKALGVLGSRIRAAEMARRQQEESSTRRNLLGSGDRSDRNRTYNFPQGRVTDHRINLTIYRLDEAMEGKLDALIEPIVQEYQADQLAALSGQD</sequence>
<accession>B2VEH7</accession>
<proteinExistence type="inferred from homology"/>